<dbReference type="EC" id="2.7.2.8" evidence="1"/>
<dbReference type="EMBL" id="CP000102">
    <property type="protein sequence ID" value="ABC56949.1"/>
    <property type="molecule type" value="Genomic_DNA"/>
</dbReference>
<dbReference type="RefSeq" id="WP_011406149.1">
    <property type="nucleotide sequence ID" value="NC_007681.1"/>
</dbReference>
<dbReference type="SMR" id="Q2NGV4"/>
<dbReference type="STRING" id="339860.Msp_0550"/>
<dbReference type="GeneID" id="41325124"/>
<dbReference type="KEGG" id="mst:Msp_0550"/>
<dbReference type="eggNOG" id="arCOG00862">
    <property type="taxonomic scope" value="Archaea"/>
</dbReference>
<dbReference type="HOGENOM" id="CLU_053680_0_0_2"/>
<dbReference type="OrthoDB" id="6816at2157"/>
<dbReference type="UniPathway" id="UPA00068">
    <property type="reaction ID" value="UER00107"/>
</dbReference>
<dbReference type="Proteomes" id="UP000001931">
    <property type="component" value="Chromosome"/>
</dbReference>
<dbReference type="GO" id="GO:0005737">
    <property type="term" value="C:cytoplasm"/>
    <property type="evidence" value="ECO:0007669"/>
    <property type="project" value="UniProtKB-SubCell"/>
</dbReference>
<dbReference type="GO" id="GO:0003991">
    <property type="term" value="F:acetylglutamate kinase activity"/>
    <property type="evidence" value="ECO:0007669"/>
    <property type="project" value="UniProtKB-UniRule"/>
</dbReference>
<dbReference type="GO" id="GO:0005524">
    <property type="term" value="F:ATP binding"/>
    <property type="evidence" value="ECO:0007669"/>
    <property type="project" value="UniProtKB-UniRule"/>
</dbReference>
<dbReference type="GO" id="GO:0042450">
    <property type="term" value="P:arginine biosynthetic process via ornithine"/>
    <property type="evidence" value="ECO:0007669"/>
    <property type="project" value="UniProtKB-UniRule"/>
</dbReference>
<dbReference type="GO" id="GO:0006526">
    <property type="term" value="P:L-arginine biosynthetic process"/>
    <property type="evidence" value="ECO:0007669"/>
    <property type="project" value="UniProtKB-UniPathway"/>
</dbReference>
<dbReference type="CDD" id="cd04250">
    <property type="entry name" value="AAK_NAGK-C"/>
    <property type="match status" value="1"/>
</dbReference>
<dbReference type="FunFam" id="3.40.1160.10:FF:000004">
    <property type="entry name" value="Acetylglutamate kinase"/>
    <property type="match status" value="1"/>
</dbReference>
<dbReference type="Gene3D" id="3.40.1160.10">
    <property type="entry name" value="Acetylglutamate kinase-like"/>
    <property type="match status" value="1"/>
</dbReference>
<dbReference type="HAMAP" id="MF_00082">
    <property type="entry name" value="ArgB"/>
    <property type="match status" value="1"/>
</dbReference>
<dbReference type="InterPro" id="IPR036393">
    <property type="entry name" value="AceGlu_kinase-like_sf"/>
</dbReference>
<dbReference type="InterPro" id="IPR004662">
    <property type="entry name" value="AcgluKinase_fam"/>
</dbReference>
<dbReference type="InterPro" id="IPR037528">
    <property type="entry name" value="ArgB"/>
</dbReference>
<dbReference type="InterPro" id="IPR001048">
    <property type="entry name" value="Asp/Glu/Uridylate_kinase"/>
</dbReference>
<dbReference type="InterPro" id="IPR001057">
    <property type="entry name" value="Glu/AcGlu_kinase"/>
</dbReference>
<dbReference type="InterPro" id="IPR041727">
    <property type="entry name" value="NAGK-C"/>
</dbReference>
<dbReference type="NCBIfam" id="TIGR00761">
    <property type="entry name" value="argB"/>
    <property type="match status" value="1"/>
</dbReference>
<dbReference type="PANTHER" id="PTHR23342">
    <property type="entry name" value="N-ACETYLGLUTAMATE SYNTHASE"/>
    <property type="match status" value="1"/>
</dbReference>
<dbReference type="PANTHER" id="PTHR23342:SF0">
    <property type="entry name" value="N-ACETYLGLUTAMATE SYNTHASE, MITOCHONDRIAL"/>
    <property type="match status" value="1"/>
</dbReference>
<dbReference type="Pfam" id="PF00696">
    <property type="entry name" value="AA_kinase"/>
    <property type="match status" value="1"/>
</dbReference>
<dbReference type="PIRSF" id="PIRSF000728">
    <property type="entry name" value="NAGK"/>
    <property type="match status" value="1"/>
</dbReference>
<dbReference type="PRINTS" id="PR00474">
    <property type="entry name" value="GLU5KINASE"/>
</dbReference>
<dbReference type="SUPFAM" id="SSF53633">
    <property type="entry name" value="Carbamate kinase-like"/>
    <property type="match status" value="1"/>
</dbReference>
<feature type="chain" id="PRO_0000264790" description="Acetylglutamate kinase">
    <location>
        <begin position="1"/>
        <end position="298"/>
    </location>
</feature>
<feature type="binding site" evidence="1">
    <location>
        <begin position="66"/>
        <end position="67"/>
    </location>
    <ligand>
        <name>substrate</name>
    </ligand>
</feature>
<feature type="binding site" evidence="1">
    <location>
        <position position="88"/>
    </location>
    <ligand>
        <name>substrate</name>
    </ligand>
</feature>
<feature type="binding site" evidence="1">
    <location>
        <position position="193"/>
    </location>
    <ligand>
        <name>substrate</name>
    </ligand>
</feature>
<feature type="site" description="Transition state stabilizer" evidence="1">
    <location>
        <position position="31"/>
    </location>
</feature>
<feature type="site" description="Transition state stabilizer" evidence="1">
    <location>
        <position position="256"/>
    </location>
</feature>
<name>ARGB_METST</name>
<comment type="function">
    <text evidence="1">Catalyzes the ATP-dependent phosphorylation of N-acetyl-L-glutamate.</text>
</comment>
<comment type="catalytic activity">
    <reaction evidence="1">
        <text>N-acetyl-L-glutamate + ATP = N-acetyl-L-glutamyl 5-phosphate + ADP</text>
        <dbReference type="Rhea" id="RHEA:14629"/>
        <dbReference type="ChEBI" id="CHEBI:30616"/>
        <dbReference type="ChEBI" id="CHEBI:44337"/>
        <dbReference type="ChEBI" id="CHEBI:57936"/>
        <dbReference type="ChEBI" id="CHEBI:456216"/>
        <dbReference type="EC" id="2.7.2.8"/>
    </reaction>
</comment>
<comment type="pathway">
    <text evidence="1">Amino-acid biosynthesis; L-arginine biosynthesis; N(2)-acetyl-L-ornithine from L-glutamate: step 2/4.</text>
</comment>
<comment type="subcellular location">
    <subcellularLocation>
        <location evidence="1">Cytoplasm</location>
    </subcellularLocation>
</comment>
<comment type="similarity">
    <text evidence="1">Belongs to the acetylglutamate kinase family. ArgB subfamily.</text>
</comment>
<protein>
    <recommendedName>
        <fullName evidence="1">Acetylglutamate kinase</fullName>
        <ecNumber evidence="1">2.7.2.8</ecNumber>
    </recommendedName>
    <alternativeName>
        <fullName evidence="1">N-acetyl-L-glutamate 5-phosphotransferase</fullName>
    </alternativeName>
    <alternativeName>
        <fullName evidence="1">NAG kinase</fullName>
        <shortName evidence="1">NAGK</shortName>
    </alternativeName>
</protein>
<proteinExistence type="inferred from homology"/>
<organism>
    <name type="scientific">Methanosphaera stadtmanae (strain ATCC 43021 / DSM 3091 / JCM 11832 / MCB-3)</name>
    <dbReference type="NCBI Taxonomy" id="339860"/>
    <lineage>
        <taxon>Archaea</taxon>
        <taxon>Methanobacteriati</taxon>
        <taxon>Methanobacteriota</taxon>
        <taxon>Methanomada group</taxon>
        <taxon>Methanobacteria</taxon>
        <taxon>Methanobacteriales</taxon>
        <taxon>Methanobacteriaceae</taxon>
        <taxon>Methanosphaera</taxon>
    </lineage>
</organism>
<reference key="1">
    <citation type="journal article" date="2006" name="J. Bacteriol.">
        <title>The genome sequence of Methanosphaera stadtmanae reveals why this human intestinal archaeon is restricted to methanol and H2 for methane formation and ATP synthesis.</title>
        <authorList>
            <person name="Fricke W.F."/>
            <person name="Seedorf H."/>
            <person name="Henne A."/>
            <person name="Kruer M."/>
            <person name="Liesegang H."/>
            <person name="Hedderich R."/>
            <person name="Gottschalk G."/>
            <person name="Thauer R.K."/>
        </authorList>
    </citation>
    <scope>NUCLEOTIDE SEQUENCE [LARGE SCALE GENOMIC DNA]</scope>
    <source>
        <strain>ATCC 43021 / DSM 3091 / JCM 11832 / MCB-3</strain>
    </source>
</reference>
<sequence>MVDQEQFDISNVLIEALPYIKKFHNKKIMIKYGGHAMIDENAMSSTARDTVLLKYVGMQPIVVHGGGPEISRSMDKMGKEPKFIGGLRVTDKETMEIVKMVLVGKINTEIVSKLGFHGGKSVGISGKDSYLVEASRKGLTKVKHENGEVLEVDLGYVGKIDRVNKQLVDDLTNNNYIPVISPLGIDDDGNTLNLNADTVAGSIASEVNAEKLIVLTDVPGILTDPDDPESMIRRIRTDELKELIKDGIITGGMIPKVETCINAVENGVKTAHILDGRLNHSILLEIFTKHGIGTMVRE</sequence>
<keyword id="KW-0028">Amino-acid biosynthesis</keyword>
<keyword id="KW-0055">Arginine biosynthesis</keyword>
<keyword id="KW-0067">ATP-binding</keyword>
<keyword id="KW-0963">Cytoplasm</keyword>
<keyword id="KW-0418">Kinase</keyword>
<keyword id="KW-0547">Nucleotide-binding</keyword>
<keyword id="KW-1185">Reference proteome</keyword>
<keyword id="KW-0808">Transferase</keyword>
<gene>
    <name evidence="1" type="primary">argB</name>
    <name type="ordered locus">Msp_0550</name>
</gene>
<accession>Q2NGV4</accession>
<evidence type="ECO:0000255" key="1">
    <source>
        <dbReference type="HAMAP-Rule" id="MF_00082"/>
    </source>
</evidence>